<comment type="similarity">
    <text evidence="1">Belongs to the universal ribosomal protein uL29 family.</text>
</comment>
<accession>Q4ZMQ2</accession>
<proteinExistence type="inferred from homology"/>
<gene>
    <name evidence="1" type="primary">rpmC</name>
    <name type="ordered locus">Psyr_4540</name>
</gene>
<keyword id="KW-0687">Ribonucleoprotein</keyword>
<keyword id="KW-0689">Ribosomal protein</keyword>
<name>RL29_PSEU2</name>
<feature type="chain" id="PRO_1000007569" description="Large ribosomal subunit protein uL29">
    <location>
        <begin position="1"/>
        <end position="63"/>
    </location>
</feature>
<protein>
    <recommendedName>
        <fullName evidence="1">Large ribosomal subunit protein uL29</fullName>
    </recommendedName>
    <alternativeName>
        <fullName evidence="2">50S ribosomal protein L29</fullName>
    </alternativeName>
</protein>
<evidence type="ECO:0000255" key="1">
    <source>
        <dbReference type="HAMAP-Rule" id="MF_00374"/>
    </source>
</evidence>
<evidence type="ECO:0000305" key="2"/>
<organism>
    <name type="scientific">Pseudomonas syringae pv. syringae (strain B728a)</name>
    <dbReference type="NCBI Taxonomy" id="205918"/>
    <lineage>
        <taxon>Bacteria</taxon>
        <taxon>Pseudomonadati</taxon>
        <taxon>Pseudomonadota</taxon>
        <taxon>Gammaproteobacteria</taxon>
        <taxon>Pseudomonadales</taxon>
        <taxon>Pseudomonadaceae</taxon>
        <taxon>Pseudomonas</taxon>
        <taxon>Pseudomonas syringae</taxon>
    </lineage>
</organism>
<dbReference type="EMBL" id="CP000075">
    <property type="protein sequence ID" value="AAY39570.1"/>
    <property type="molecule type" value="Genomic_DNA"/>
</dbReference>
<dbReference type="RefSeq" id="WP_002555481.1">
    <property type="nucleotide sequence ID" value="NC_007005.1"/>
</dbReference>
<dbReference type="RefSeq" id="YP_237608.1">
    <property type="nucleotide sequence ID" value="NC_007005.1"/>
</dbReference>
<dbReference type="SMR" id="Q4ZMQ2"/>
<dbReference type="STRING" id="205918.Psyr_4540"/>
<dbReference type="GeneID" id="98285430"/>
<dbReference type="KEGG" id="psb:Psyr_4540"/>
<dbReference type="PATRIC" id="fig|205918.7.peg.4679"/>
<dbReference type="eggNOG" id="COG0255">
    <property type="taxonomic scope" value="Bacteria"/>
</dbReference>
<dbReference type="HOGENOM" id="CLU_158491_1_2_6"/>
<dbReference type="OrthoDB" id="9815192at2"/>
<dbReference type="PRO" id="PR:Q4ZMQ2"/>
<dbReference type="Proteomes" id="UP000000426">
    <property type="component" value="Chromosome"/>
</dbReference>
<dbReference type="GO" id="GO:0022625">
    <property type="term" value="C:cytosolic large ribosomal subunit"/>
    <property type="evidence" value="ECO:0007669"/>
    <property type="project" value="TreeGrafter"/>
</dbReference>
<dbReference type="GO" id="GO:0003735">
    <property type="term" value="F:structural constituent of ribosome"/>
    <property type="evidence" value="ECO:0007669"/>
    <property type="project" value="InterPro"/>
</dbReference>
<dbReference type="GO" id="GO:0006412">
    <property type="term" value="P:translation"/>
    <property type="evidence" value="ECO:0007669"/>
    <property type="project" value="UniProtKB-UniRule"/>
</dbReference>
<dbReference type="CDD" id="cd00427">
    <property type="entry name" value="Ribosomal_L29_HIP"/>
    <property type="match status" value="1"/>
</dbReference>
<dbReference type="FunFam" id="1.10.287.310:FF:000001">
    <property type="entry name" value="50S ribosomal protein L29"/>
    <property type="match status" value="1"/>
</dbReference>
<dbReference type="Gene3D" id="1.10.287.310">
    <property type="match status" value="1"/>
</dbReference>
<dbReference type="HAMAP" id="MF_00374">
    <property type="entry name" value="Ribosomal_uL29"/>
    <property type="match status" value="1"/>
</dbReference>
<dbReference type="InterPro" id="IPR050063">
    <property type="entry name" value="Ribosomal_protein_uL29"/>
</dbReference>
<dbReference type="InterPro" id="IPR001854">
    <property type="entry name" value="Ribosomal_uL29"/>
</dbReference>
<dbReference type="InterPro" id="IPR018254">
    <property type="entry name" value="Ribosomal_uL29_CS"/>
</dbReference>
<dbReference type="InterPro" id="IPR036049">
    <property type="entry name" value="Ribosomal_uL29_sf"/>
</dbReference>
<dbReference type="NCBIfam" id="TIGR00012">
    <property type="entry name" value="L29"/>
    <property type="match status" value="1"/>
</dbReference>
<dbReference type="PANTHER" id="PTHR10916">
    <property type="entry name" value="60S RIBOSOMAL PROTEIN L35/50S RIBOSOMAL PROTEIN L29"/>
    <property type="match status" value="1"/>
</dbReference>
<dbReference type="PANTHER" id="PTHR10916:SF0">
    <property type="entry name" value="LARGE RIBOSOMAL SUBUNIT PROTEIN UL29C"/>
    <property type="match status" value="1"/>
</dbReference>
<dbReference type="Pfam" id="PF00831">
    <property type="entry name" value="Ribosomal_L29"/>
    <property type="match status" value="1"/>
</dbReference>
<dbReference type="SUPFAM" id="SSF46561">
    <property type="entry name" value="Ribosomal protein L29 (L29p)"/>
    <property type="match status" value="1"/>
</dbReference>
<dbReference type="PROSITE" id="PS00579">
    <property type="entry name" value="RIBOSOMAL_L29"/>
    <property type="match status" value="1"/>
</dbReference>
<sequence>MKANELREKSAQQLNEQLLGLLRDQFNLRMQKATGQLGQSHLLSQVKRDIARVKTVLNQQAGK</sequence>
<reference key="1">
    <citation type="journal article" date="2005" name="Proc. Natl. Acad. Sci. U.S.A.">
        <title>Comparison of the complete genome sequences of Pseudomonas syringae pv. syringae B728a and pv. tomato DC3000.</title>
        <authorList>
            <person name="Feil H."/>
            <person name="Feil W.S."/>
            <person name="Chain P."/>
            <person name="Larimer F."/>
            <person name="Dibartolo G."/>
            <person name="Copeland A."/>
            <person name="Lykidis A."/>
            <person name="Trong S."/>
            <person name="Nolan M."/>
            <person name="Goltsman E."/>
            <person name="Thiel J."/>
            <person name="Malfatti S."/>
            <person name="Loper J.E."/>
            <person name="Lapidus A."/>
            <person name="Detter J.C."/>
            <person name="Land M."/>
            <person name="Richardson P.M."/>
            <person name="Kyrpides N.C."/>
            <person name="Ivanova N."/>
            <person name="Lindow S.E."/>
        </authorList>
    </citation>
    <scope>NUCLEOTIDE SEQUENCE [LARGE SCALE GENOMIC DNA]</scope>
    <source>
        <strain>B728a</strain>
    </source>
</reference>